<evidence type="ECO:0000255" key="1">
    <source>
        <dbReference type="HAMAP-Rule" id="MF_01620"/>
    </source>
</evidence>
<accession>Q5PKQ3</accession>
<sequence>MEQVVIVDAIRTPMGRSKGGAFRNVRAEDLSAHLMRSLLARNPSLTAATLDDIYWGCVQQTLEQGFNIARNAALLAEIPHSVPAVTVNRLCGSSMQALHDAARMIMTGDAQVCLVGGVEHMGHVPMSHGVDFHPGLSRNVAKAAGMMGLTAEMLSRLHGISREMQDQFAARSHARAWAATQSGAFKTEIIPTGGHDADGVLKQFNYDEVIRPETTVEALSTLRPAFDPVSGTVTAGTSSALSDGAAAMLVMSESRARELGLKPRARIRSMAVVGCDPSIMGYGPVPASKLALKKAGLSASDIDVFEMNEAFAAQILPCIKDLGLMEQIDEKINLNGGAIALGHPLGCSGARISTTLINLMERKDAQFGLATMCIGLGQGIATVFERV</sequence>
<gene>
    <name evidence="1" type="primary">fadA</name>
    <name type="ordered locus">SPA3822</name>
</gene>
<organism>
    <name type="scientific">Salmonella paratyphi A (strain ATCC 9150 / SARB42)</name>
    <dbReference type="NCBI Taxonomy" id="295319"/>
    <lineage>
        <taxon>Bacteria</taxon>
        <taxon>Pseudomonadati</taxon>
        <taxon>Pseudomonadota</taxon>
        <taxon>Gammaproteobacteria</taxon>
        <taxon>Enterobacterales</taxon>
        <taxon>Enterobacteriaceae</taxon>
        <taxon>Salmonella</taxon>
    </lineage>
</organism>
<keyword id="KW-0012">Acyltransferase</keyword>
<keyword id="KW-0963">Cytoplasm</keyword>
<keyword id="KW-0276">Fatty acid metabolism</keyword>
<keyword id="KW-0442">Lipid degradation</keyword>
<keyword id="KW-0443">Lipid metabolism</keyword>
<keyword id="KW-0808">Transferase</keyword>
<name>FADA_SALPA</name>
<reference key="1">
    <citation type="journal article" date="2004" name="Nat. Genet.">
        <title>Comparison of genome degradation in Paratyphi A and Typhi, human-restricted serovars of Salmonella enterica that cause typhoid.</title>
        <authorList>
            <person name="McClelland M."/>
            <person name="Sanderson K.E."/>
            <person name="Clifton S.W."/>
            <person name="Latreille P."/>
            <person name="Porwollik S."/>
            <person name="Sabo A."/>
            <person name="Meyer R."/>
            <person name="Bieri T."/>
            <person name="Ozersky P."/>
            <person name="McLellan M."/>
            <person name="Harkins C.R."/>
            <person name="Wang C."/>
            <person name="Nguyen C."/>
            <person name="Berghoff A."/>
            <person name="Elliott G."/>
            <person name="Kohlberg S."/>
            <person name="Strong C."/>
            <person name="Du F."/>
            <person name="Carter J."/>
            <person name="Kremizki C."/>
            <person name="Layman D."/>
            <person name="Leonard S."/>
            <person name="Sun H."/>
            <person name="Fulton L."/>
            <person name="Nash W."/>
            <person name="Miner T."/>
            <person name="Minx P."/>
            <person name="Delehaunty K."/>
            <person name="Fronick C."/>
            <person name="Magrini V."/>
            <person name="Nhan M."/>
            <person name="Warren W."/>
            <person name="Florea L."/>
            <person name="Spieth J."/>
            <person name="Wilson R.K."/>
        </authorList>
    </citation>
    <scope>NUCLEOTIDE SEQUENCE [LARGE SCALE GENOMIC DNA]</scope>
    <source>
        <strain>ATCC 9150 / SARB42</strain>
    </source>
</reference>
<protein>
    <recommendedName>
        <fullName evidence="1">3-ketoacyl-CoA thiolase</fullName>
        <ecNumber evidence="1">2.3.1.16</ecNumber>
    </recommendedName>
    <alternativeName>
        <fullName evidence="1">Acetyl-CoA acyltransferase</fullName>
    </alternativeName>
    <alternativeName>
        <fullName evidence="1">Beta-ketothiolase</fullName>
    </alternativeName>
    <alternativeName>
        <fullName evidence="1">Fatty acid oxidation complex subunit beta</fullName>
    </alternativeName>
</protein>
<feature type="chain" id="PRO_0000206389" description="3-ketoacyl-CoA thiolase">
    <location>
        <begin position="1"/>
        <end position="387"/>
    </location>
</feature>
<feature type="active site" description="Acyl-thioester intermediate" evidence="1">
    <location>
        <position position="91"/>
    </location>
</feature>
<feature type="active site" description="Proton acceptor" evidence="1">
    <location>
        <position position="343"/>
    </location>
</feature>
<feature type="active site" description="Proton acceptor" evidence="1">
    <location>
        <position position="373"/>
    </location>
</feature>
<comment type="function">
    <text evidence="1">Catalyzes the final step of fatty acid oxidation in which acetyl-CoA is released and the CoA ester of a fatty acid two carbons shorter is formed.</text>
</comment>
<comment type="catalytic activity">
    <reaction evidence="1">
        <text>an acyl-CoA + acetyl-CoA = a 3-oxoacyl-CoA + CoA</text>
        <dbReference type="Rhea" id="RHEA:21564"/>
        <dbReference type="ChEBI" id="CHEBI:57287"/>
        <dbReference type="ChEBI" id="CHEBI:57288"/>
        <dbReference type="ChEBI" id="CHEBI:58342"/>
        <dbReference type="ChEBI" id="CHEBI:90726"/>
        <dbReference type="EC" id="2.3.1.16"/>
    </reaction>
</comment>
<comment type="pathway">
    <text evidence="1">Lipid metabolism; fatty acid beta-oxidation.</text>
</comment>
<comment type="subunit">
    <text evidence="1">Heterotetramer of two alpha chains (FadB) and two beta chains (FadA).</text>
</comment>
<comment type="subcellular location">
    <subcellularLocation>
        <location evidence="1">Cytoplasm</location>
    </subcellularLocation>
</comment>
<comment type="similarity">
    <text evidence="1">Belongs to the thiolase-like superfamily. Thiolase family.</text>
</comment>
<proteinExistence type="inferred from homology"/>
<dbReference type="EC" id="2.3.1.16" evidence="1"/>
<dbReference type="EMBL" id="CP000026">
    <property type="protein sequence ID" value="AAV79597.1"/>
    <property type="molecule type" value="Genomic_DNA"/>
</dbReference>
<dbReference type="RefSeq" id="WP_000438778.1">
    <property type="nucleotide sequence ID" value="NC_006511.1"/>
</dbReference>
<dbReference type="SMR" id="Q5PKQ3"/>
<dbReference type="KEGG" id="spt:SPA3822"/>
<dbReference type="HOGENOM" id="CLU_031026_2_3_6"/>
<dbReference type="UniPathway" id="UPA00659"/>
<dbReference type="Proteomes" id="UP000008185">
    <property type="component" value="Chromosome"/>
</dbReference>
<dbReference type="GO" id="GO:0005737">
    <property type="term" value="C:cytoplasm"/>
    <property type="evidence" value="ECO:0007669"/>
    <property type="project" value="UniProtKB-SubCell"/>
</dbReference>
<dbReference type="GO" id="GO:0003988">
    <property type="term" value="F:acetyl-CoA C-acyltransferase activity"/>
    <property type="evidence" value="ECO:0007669"/>
    <property type="project" value="UniProtKB-UniRule"/>
</dbReference>
<dbReference type="GO" id="GO:0006635">
    <property type="term" value="P:fatty acid beta-oxidation"/>
    <property type="evidence" value="ECO:0007669"/>
    <property type="project" value="UniProtKB-UniRule"/>
</dbReference>
<dbReference type="GO" id="GO:0010124">
    <property type="term" value="P:phenylacetate catabolic process"/>
    <property type="evidence" value="ECO:0007669"/>
    <property type="project" value="TreeGrafter"/>
</dbReference>
<dbReference type="CDD" id="cd00751">
    <property type="entry name" value="thiolase"/>
    <property type="match status" value="1"/>
</dbReference>
<dbReference type="FunFam" id="3.40.47.10:FF:000010">
    <property type="entry name" value="Acetyl-CoA acetyltransferase (Thiolase)"/>
    <property type="match status" value="1"/>
</dbReference>
<dbReference type="Gene3D" id="3.40.47.10">
    <property type="match status" value="2"/>
</dbReference>
<dbReference type="HAMAP" id="MF_01620">
    <property type="entry name" value="FadA"/>
    <property type="match status" value="1"/>
</dbReference>
<dbReference type="InterPro" id="IPR012805">
    <property type="entry name" value="FadA"/>
</dbReference>
<dbReference type="InterPro" id="IPR002155">
    <property type="entry name" value="Thiolase"/>
</dbReference>
<dbReference type="InterPro" id="IPR016039">
    <property type="entry name" value="Thiolase-like"/>
</dbReference>
<dbReference type="InterPro" id="IPR050215">
    <property type="entry name" value="Thiolase-like_sf_Thiolase"/>
</dbReference>
<dbReference type="InterPro" id="IPR020615">
    <property type="entry name" value="Thiolase_acyl_enz_int_AS"/>
</dbReference>
<dbReference type="InterPro" id="IPR020610">
    <property type="entry name" value="Thiolase_AS"/>
</dbReference>
<dbReference type="InterPro" id="IPR020617">
    <property type="entry name" value="Thiolase_C"/>
</dbReference>
<dbReference type="InterPro" id="IPR020613">
    <property type="entry name" value="Thiolase_CS"/>
</dbReference>
<dbReference type="InterPro" id="IPR020616">
    <property type="entry name" value="Thiolase_N"/>
</dbReference>
<dbReference type="NCBIfam" id="TIGR01930">
    <property type="entry name" value="AcCoA-C-Actrans"/>
    <property type="match status" value="1"/>
</dbReference>
<dbReference type="NCBIfam" id="TIGR02445">
    <property type="entry name" value="fadA"/>
    <property type="match status" value="1"/>
</dbReference>
<dbReference type="NCBIfam" id="NF006510">
    <property type="entry name" value="PRK08947.1"/>
    <property type="match status" value="1"/>
</dbReference>
<dbReference type="PANTHER" id="PTHR43853:SF11">
    <property type="entry name" value="3-KETOACYL-COA THIOLASE FADA"/>
    <property type="match status" value="1"/>
</dbReference>
<dbReference type="PANTHER" id="PTHR43853">
    <property type="entry name" value="3-KETOACYL-COA THIOLASE, PEROXISOMAL"/>
    <property type="match status" value="1"/>
</dbReference>
<dbReference type="Pfam" id="PF02803">
    <property type="entry name" value="Thiolase_C"/>
    <property type="match status" value="1"/>
</dbReference>
<dbReference type="Pfam" id="PF00108">
    <property type="entry name" value="Thiolase_N"/>
    <property type="match status" value="1"/>
</dbReference>
<dbReference type="PIRSF" id="PIRSF000429">
    <property type="entry name" value="Ac-CoA_Ac_transf"/>
    <property type="match status" value="1"/>
</dbReference>
<dbReference type="SUPFAM" id="SSF53901">
    <property type="entry name" value="Thiolase-like"/>
    <property type="match status" value="2"/>
</dbReference>
<dbReference type="PROSITE" id="PS00098">
    <property type="entry name" value="THIOLASE_1"/>
    <property type="match status" value="1"/>
</dbReference>
<dbReference type="PROSITE" id="PS00737">
    <property type="entry name" value="THIOLASE_2"/>
    <property type="match status" value="1"/>
</dbReference>
<dbReference type="PROSITE" id="PS00099">
    <property type="entry name" value="THIOLASE_3"/>
    <property type="match status" value="1"/>
</dbReference>